<dbReference type="EMBL" id="CP000936">
    <property type="protein sequence ID" value="ACA36117.1"/>
    <property type="molecule type" value="Genomic_DNA"/>
</dbReference>
<dbReference type="RefSeq" id="WP_001125943.1">
    <property type="nucleotide sequence ID" value="NC_010380.1"/>
</dbReference>
<dbReference type="SMR" id="B1IBC0"/>
<dbReference type="GeneID" id="93739777"/>
<dbReference type="KEGG" id="spv:SPH_1061"/>
<dbReference type="HOGENOM" id="CLU_169643_3_0_9"/>
<dbReference type="Proteomes" id="UP000002163">
    <property type="component" value="Chromosome"/>
</dbReference>
<dbReference type="GO" id="GO:0022625">
    <property type="term" value="C:cytosolic large ribosomal subunit"/>
    <property type="evidence" value="ECO:0007669"/>
    <property type="project" value="TreeGrafter"/>
</dbReference>
<dbReference type="GO" id="GO:0003735">
    <property type="term" value="F:structural constituent of ribosome"/>
    <property type="evidence" value="ECO:0007669"/>
    <property type="project" value="InterPro"/>
</dbReference>
<dbReference type="GO" id="GO:0006412">
    <property type="term" value="P:translation"/>
    <property type="evidence" value="ECO:0007669"/>
    <property type="project" value="UniProtKB-UniRule"/>
</dbReference>
<dbReference type="FunFam" id="4.10.410.60:FF:000001">
    <property type="entry name" value="50S ribosomal protein L35"/>
    <property type="match status" value="1"/>
</dbReference>
<dbReference type="Gene3D" id="4.10.410.60">
    <property type="match status" value="1"/>
</dbReference>
<dbReference type="HAMAP" id="MF_00514">
    <property type="entry name" value="Ribosomal_bL35"/>
    <property type="match status" value="1"/>
</dbReference>
<dbReference type="InterPro" id="IPR001706">
    <property type="entry name" value="Ribosomal_bL35"/>
</dbReference>
<dbReference type="InterPro" id="IPR021137">
    <property type="entry name" value="Ribosomal_bL35-like"/>
</dbReference>
<dbReference type="InterPro" id="IPR018265">
    <property type="entry name" value="Ribosomal_bL35_CS"/>
</dbReference>
<dbReference type="InterPro" id="IPR037229">
    <property type="entry name" value="Ribosomal_bL35_sf"/>
</dbReference>
<dbReference type="NCBIfam" id="TIGR00001">
    <property type="entry name" value="rpmI_bact"/>
    <property type="match status" value="1"/>
</dbReference>
<dbReference type="PANTHER" id="PTHR33343">
    <property type="entry name" value="54S RIBOSOMAL PROTEIN BL35M"/>
    <property type="match status" value="1"/>
</dbReference>
<dbReference type="PANTHER" id="PTHR33343:SF1">
    <property type="entry name" value="LARGE RIBOSOMAL SUBUNIT PROTEIN BL35M"/>
    <property type="match status" value="1"/>
</dbReference>
<dbReference type="Pfam" id="PF01632">
    <property type="entry name" value="Ribosomal_L35p"/>
    <property type="match status" value="1"/>
</dbReference>
<dbReference type="PRINTS" id="PR00064">
    <property type="entry name" value="RIBOSOMALL35"/>
</dbReference>
<dbReference type="SUPFAM" id="SSF143034">
    <property type="entry name" value="L35p-like"/>
    <property type="match status" value="1"/>
</dbReference>
<dbReference type="PROSITE" id="PS00936">
    <property type="entry name" value="RIBOSOMAL_L35"/>
    <property type="match status" value="1"/>
</dbReference>
<protein>
    <recommendedName>
        <fullName evidence="1">Large ribosomal subunit protein bL35</fullName>
    </recommendedName>
    <alternativeName>
        <fullName evidence="3">50S ribosomal protein L35</fullName>
    </alternativeName>
</protein>
<proteinExistence type="inferred from homology"/>
<reference key="1">
    <citation type="journal article" date="2010" name="Genome Biol.">
        <title>Structure and dynamics of the pan-genome of Streptococcus pneumoniae and closely related species.</title>
        <authorList>
            <person name="Donati C."/>
            <person name="Hiller N.L."/>
            <person name="Tettelin H."/>
            <person name="Muzzi A."/>
            <person name="Croucher N.J."/>
            <person name="Angiuoli S.V."/>
            <person name="Oggioni M."/>
            <person name="Dunning Hotopp J.C."/>
            <person name="Hu F.Z."/>
            <person name="Riley D.R."/>
            <person name="Covacci A."/>
            <person name="Mitchell T.J."/>
            <person name="Bentley S.D."/>
            <person name="Kilian M."/>
            <person name="Ehrlich G.D."/>
            <person name="Rappuoli R."/>
            <person name="Moxon E.R."/>
            <person name="Masignani V."/>
        </authorList>
    </citation>
    <scope>NUCLEOTIDE SEQUENCE [LARGE SCALE GENOMIC DNA]</scope>
    <source>
        <strain>Hungary19A-6</strain>
    </source>
</reference>
<accession>B1IBC0</accession>
<gene>
    <name evidence="1" type="primary">rpmI</name>
    <name type="ordered locus">SPH_1061</name>
</gene>
<name>RL35_STRPI</name>
<sequence length="66" mass="7836">MPKQKTHRASAKRFKRTGSGGLKRFRAYTSHRFHGKTKKQRRHLRKASMVHSGDYKRIKAMLTRLK</sequence>
<comment type="similarity">
    <text evidence="1">Belongs to the bacterial ribosomal protein bL35 family.</text>
</comment>
<feature type="chain" id="PRO_1000127414" description="Large ribosomal subunit protein bL35">
    <location>
        <begin position="1"/>
        <end position="66"/>
    </location>
</feature>
<feature type="region of interest" description="Disordered" evidence="2">
    <location>
        <begin position="1"/>
        <end position="21"/>
    </location>
</feature>
<feature type="compositionally biased region" description="Basic residues" evidence="2">
    <location>
        <begin position="1"/>
        <end position="16"/>
    </location>
</feature>
<keyword id="KW-0687">Ribonucleoprotein</keyword>
<keyword id="KW-0689">Ribosomal protein</keyword>
<evidence type="ECO:0000255" key="1">
    <source>
        <dbReference type="HAMAP-Rule" id="MF_00514"/>
    </source>
</evidence>
<evidence type="ECO:0000256" key="2">
    <source>
        <dbReference type="SAM" id="MobiDB-lite"/>
    </source>
</evidence>
<evidence type="ECO:0000305" key="3"/>
<organism>
    <name type="scientific">Streptococcus pneumoniae (strain Hungary19A-6)</name>
    <dbReference type="NCBI Taxonomy" id="487214"/>
    <lineage>
        <taxon>Bacteria</taxon>
        <taxon>Bacillati</taxon>
        <taxon>Bacillota</taxon>
        <taxon>Bacilli</taxon>
        <taxon>Lactobacillales</taxon>
        <taxon>Streptococcaceae</taxon>
        <taxon>Streptococcus</taxon>
    </lineage>
</organism>